<comment type="function">
    <text evidence="1 3 7 8 9">Negative regulator of protease production and sporulation. Acts by binding directly to the promoter of protease genes (aprE and nprE), and by repressing oligopeptide permease operons (appABCDF and oppABCDF), thereby preventing uptake of oligopeptides required for initiation of sporulation. Acts with SinR as a corepressor of epr expression. Binds to non-m6A-5-methylated 5'-GACGAG-3' sites, tested with scpA; when the target is methylated by DnmA, this repressor no longer binds and transcription is up-regulated (PubMed:32324221).</text>
</comment>
<comment type="subunit">
    <text evidence="1 4 7 10">Homodimer. Interacts with SinR.</text>
</comment>
<comment type="interaction">
    <interactant intactId="EBI-2121844">
        <id>P11065</id>
    </interactant>
    <interactant intactId="EBI-5242785">
        <id>O34483</id>
        <label>hprK</label>
    </interactant>
    <organismsDiffer>false</organismsDiffer>
    <experiments>3</experiments>
</comment>
<comment type="induction">
    <text evidence="5 6">Negatively regulated by the Mrp homolog protein SalA and by SenS.</text>
</comment>
<protein>
    <recommendedName>
        <fullName>DNA-binding transcriptional repressor ScoC</fullName>
    </recommendedName>
    <alternativeName>
        <fullName evidence="1">HTH-type transcriptional regulator Hpr</fullName>
    </alternativeName>
    <alternativeName>
        <fullName evidence="1">Protease production regulatory protein Hpr</fullName>
    </alternativeName>
</protein>
<keyword id="KW-0002">3D-structure</keyword>
<keyword id="KW-0903">Direct protein sequencing</keyword>
<keyword id="KW-0238">DNA-binding</keyword>
<keyword id="KW-1185">Reference proteome</keyword>
<keyword id="KW-0678">Repressor</keyword>
<keyword id="KW-0749">Sporulation</keyword>
<keyword id="KW-0804">Transcription</keyword>
<keyword id="KW-0805">Transcription regulation</keyword>
<feature type="chain" id="PRO_0000054361" description="DNA-binding transcriptional repressor ScoC">
    <location>
        <begin position="1"/>
        <end position="203"/>
    </location>
</feature>
<feature type="domain" description="HTH marR-type" evidence="1">
    <location>
        <begin position="13"/>
        <end position="157"/>
    </location>
</feature>
<feature type="DNA-binding region" description="H-T-H motif" evidence="1">
    <location>
        <begin position="63"/>
        <end position="86"/>
    </location>
</feature>
<feature type="region of interest" description="Disordered" evidence="2">
    <location>
        <begin position="183"/>
        <end position="203"/>
    </location>
</feature>
<feature type="compositionally biased region" description="Acidic residues" evidence="2">
    <location>
        <begin position="191"/>
        <end position="203"/>
    </location>
</feature>
<feature type="helix" evidence="12">
    <location>
        <begin position="10"/>
        <end position="38"/>
    </location>
</feature>
<feature type="helix" evidence="12">
    <location>
        <begin position="40"/>
        <end position="42"/>
    </location>
</feature>
<feature type="helix" evidence="12">
    <location>
        <begin position="46"/>
        <end position="58"/>
    </location>
</feature>
<feature type="strand" evidence="12">
    <location>
        <begin position="60"/>
        <end position="62"/>
    </location>
</feature>
<feature type="helix" evidence="12">
    <location>
        <begin position="63"/>
        <end position="69"/>
    </location>
</feature>
<feature type="helix" evidence="12">
    <location>
        <begin position="74"/>
        <end position="86"/>
    </location>
</feature>
<feature type="strand" evidence="12">
    <location>
        <begin position="89"/>
        <end position="93"/>
    </location>
</feature>
<feature type="strand" evidence="12">
    <location>
        <begin position="103"/>
        <end position="106"/>
    </location>
</feature>
<feature type="helix" evidence="12">
    <location>
        <begin position="108"/>
        <end position="120"/>
    </location>
</feature>
<feature type="helix" evidence="12">
    <location>
        <begin position="123"/>
        <end position="125"/>
    </location>
</feature>
<feature type="helix" evidence="12">
    <location>
        <begin position="127"/>
        <end position="131"/>
    </location>
</feature>
<feature type="helix" evidence="12">
    <location>
        <begin position="133"/>
        <end position="139"/>
    </location>
</feature>
<feature type="helix" evidence="12">
    <location>
        <begin position="146"/>
        <end position="161"/>
    </location>
</feature>
<feature type="turn" evidence="12">
    <location>
        <begin position="162"/>
        <end position="165"/>
    </location>
</feature>
<feature type="helix" evidence="12">
    <location>
        <begin position="169"/>
        <end position="174"/>
    </location>
</feature>
<feature type="strand" evidence="12">
    <location>
        <begin position="175"/>
        <end position="178"/>
    </location>
</feature>
<feature type="strand" evidence="12">
    <location>
        <begin position="181"/>
        <end position="184"/>
    </location>
</feature>
<name>HPR_BACSU</name>
<gene>
    <name evidence="1 11" type="primary">hpr</name>
    <name type="synonym">catA</name>
    <name type="synonym">scoC</name>
    <name type="ordered locus">BSU09990</name>
</gene>
<reference key="1">
    <citation type="journal article" date="1988" name="J. Bacteriol.">
        <title>Sequence analysis and regulation of the hpr locus, a regulatory gene for protease production and sporulation in Bacillus subtilis.</title>
        <authorList>
            <person name="Perego M."/>
            <person name="Hoch J.A."/>
        </authorList>
    </citation>
    <scope>NUCLEOTIDE SEQUENCE [GENOMIC DNA]</scope>
</reference>
<reference key="2">
    <citation type="journal article" date="1998" name="Microbiology">
        <title>The 172 kb prkA-addAB region from 83 degrees to 97 degrees of the Bacillus subtilis chromosome contains several dysfunctional genes, the glyB marker, many genes encoding transporter proteins, and the ubiquitous hit gene.</title>
        <authorList>
            <person name="Noback M.A."/>
            <person name="Holsappel S."/>
            <person name="Kiewiet R."/>
            <person name="Terpstra P."/>
            <person name="Wambutt R."/>
            <person name="Wedler H."/>
            <person name="Venema G."/>
            <person name="Bron S."/>
        </authorList>
    </citation>
    <scope>NUCLEOTIDE SEQUENCE [GENOMIC DNA]</scope>
    <source>
        <strain>168</strain>
    </source>
</reference>
<reference key="3">
    <citation type="journal article" date="1997" name="Nature">
        <title>The complete genome sequence of the Gram-positive bacterium Bacillus subtilis.</title>
        <authorList>
            <person name="Kunst F."/>
            <person name="Ogasawara N."/>
            <person name="Moszer I."/>
            <person name="Albertini A.M."/>
            <person name="Alloni G."/>
            <person name="Azevedo V."/>
            <person name="Bertero M.G."/>
            <person name="Bessieres P."/>
            <person name="Bolotin A."/>
            <person name="Borchert S."/>
            <person name="Borriss R."/>
            <person name="Boursier L."/>
            <person name="Brans A."/>
            <person name="Braun M."/>
            <person name="Brignell S.C."/>
            <person name="Bron S."/>
            <person name="Brouillet S."/>
            <person name="Bruschi C.V."/>
            <person name="Caldwell B."/>
            <person name="Capuano V."/>
            <person name="Carter N.M."/>
            <person name="Choi S.-K."/>
            <person name="Codani J.-J."/>
            <person name="Connerton I.F."/>
            <person name="Cummings N.J."/>
            <person name="Daniel R.A."/>
            <person name="Denizot F."/>
            <person name="Devine K.M."/>
            <person name="Duesterhoeft A."/>
            <person name="Ehrlich S.D."/>
            <person name="Emmerson P.T."/>
            <person name="Entian K.-D."/>
            <person name="Errington J."/>
            <person name="Fabret C."/>
            <person name="Ferrari E."/>
            <person name="Foulger D."/>
            <person name="Fritz C."/>
            <person name="Fujita M."/>
            <person name="Fujita Y."/>
            <person name="Fuma S."/>
            <person name="Galizzi A."/>
            <person name="Galleron N."/>
            <person name="Ghim S.-Y."/>
            <person name="Glaser P."/>
            <person name="Goffeau A."/>
            <person name="Golightly E.J."/>
            <person name="Grandi G."/>
            <person name="Guiseppi G."/>
            <person name="Guy B.J."/>
            <person name="Haga K."/>
            <person name="Haiech J."/>
            <person name="Harwood C.R."/>
            <person name="Henaut A."/>
            <person name="Hilbert H."/>
            <person name="Holsappel S."/>
            <person name="Hosono S."/>
            <person name="Hullo M.-F."/>
            <person name="Itaya M."/>
            <person name="Jones L.-M."/>
            <person name="Joris B."/>
            <person name="Karamata D."/>
            <person name="Kasahara Y."/>
            <person name="Klaerr-Blanchard M."/>
            <person name="Klein C."/>
            <person name="Kobayashi Y."/>
            <person name="Koetter P."/>
            <person name="Koningstein G."/>
            <person name="Krogh S."/>
            <person name="Kumano M."/>
            <person name="Kurita K."/>
            <person name="Lapidus A."/>
            <person name="Lardinois S."/>
            <person name="Lauber J."/>
            <person name="Lazarevic V."/>
            <person name="Lee S.-M."/>
            <person name="Levine A."/>
            <person name="Liu H."/>
            <person name="Masuda S."/>
            <person name="Mauel C."/>
            <person name="Medigue C."/>
            <person name="Medina N."/>
            <person name="Mellado R.P."/>
            <person name="Mizuno M."/>
            <person name="Moestl D."/>
            <person name="Nakai S."/>
            <person name="Noback M."/>
            <person name="Noone D."/>
            <person name="O'Reilly M."/>
            <person name="Ogawa K."/>
            <person name="Ogiwara A."/>
            <person name="Oudega B."/>
            <person name="Park S.-H."/>
            <person name="Parro V."/>
            <person name="Pohl T.M."/>
            <person name="Portetelle D."/>
            <person name="Porwollik S."/>
            <person name="Prescott A.M."/>
            <person name="Presecan E."/>
            <person name="Pujic P."/>
            <person name="Purnelle B."/>
            <person name="Rapoport G."/>
            <person name="Rey M."/>
            <person name="Reynolds S."/>
            <person name="Rieger M."/>
            <person name="Rivolta C."/>
            <person name="Rocha E."/>
            <person name="Roche B."/>
            <person name="Rose M."/>
            <person name="Sadaie Y."/>
            <person name="Sato T."/>
            <person name="Scanlan E."/>
            <person name="Schleich S."/>
            <person name="Schroeter R."/>
            <person name="Scoffone F."/>
            <person name="Sekiguchi J."/>
            <person name="Sekowska A."/>
            <person name="Seror S.J."/>
            <person name="Serror P."/>
            <person name="Shin B.-S."/>
            <person name="Soldo B."/>
            <person name="Sorokin A."/>
            <person name="Tacconi E."/>
            <person name="Takagi T."/>
            <person name="Takahashi H."/>
            <person name="Takemaru K."/>
            <person name="Takeuchi M."/>
            <person name="Tamakoshi A."/>
            <person name="Tanaka T."/>
            <person name="Terpstra P."/>
            <person name="Tognoni A."/>
            <person name="Tosato V."/>
            <person name="Uchiyama S."/>
            <person name="Vandenbol M."/>
            <person name="Vannier F."/>
            <person name="Vassarotti A."/>
            <person name="Viari A."/>
            <person name="Wambutt R."/>
            <person name="Wedler E."/>
            <person name="Wedler H."/>
            <person name="Weitzenegger T."/>
            <person name="Winters P."/>
            <person name="Wipat A."/>
            <person name="Yamamoto H."/>
            <person name="Yamane K."/>
            <person name="Yasumoto K."/>
            <person name="Yata K."/>
            <person name="Yoshida K."/>
            <person name="Yoshikawa H.-F."/>
            <person name="Zumstein E."/>
            <person name="Yoshikawa H."/>
            <person name="Danchin A."/>
        </authorList>
    </citation>
    <scope>NUCLEOTIDE SEQUENCE [LARGE SCALE GENOMIC DNA]</scope>
    <source>
        <strain>168</strain>
    </source>
</reference>
<reference key="4">
    <citation type="journal article" date="1991" name="J. Biol. Chem.">
        <title>The transition state regulator Hpr of Bacillus subtilis is a DNA-binding protein.</title>
        <authorList>
            <person name="Kallio P.T."/>
            <person name="Fagelson J.E."/>
            <person name="Hoch J.A."/>
            <person name="Strauch M.A."/>
        </authorList>
    </citation>
    <scope>PROTEIN SEQUENCE OF 1-10</scope>
    <scope>FUNCTION</scope>
</reference>
<reference key="5">
    <citation type="journal article" date="1999" name="J. Bacteriol.">
        <title>ScoC regulates peptide transport and sporulation initiation in Bacillus subtilis.</title>
        <authorList>
            <person name="Koide A."/>
            <person name="Perego M."/>
            <person name="Hoch J.A."/>
        </authorList>
    </citation>
    <scope>FUNCTION</scope>
    <source>
        <strain>168 / JH642</strain>
    </source>
</reference>
<reference key="6">
    <citation type="journal article" date="2004" name="Biotechnol. Lett.">
        <title>Bacillus subtilis transcriptional regulators interaction.</title>
        <authorList>
            <person name="Sanchez A."/>
            <person name="Olmos J."/>
        </authorList>
    </citation>
    <scope>INTERACTION WITH SINR</scope>
</reference>
<reference key="7">
    <citation type="journal article" date="2004" name="J. Bacteriol.">
        <title>Bacillus subtilis SalA (YbaL) negatively regulates expression of scoC, which encodes the repressor for the alkaline exoprotease gene, aprE.</title>
        <authorList>
            <person name="Ogura M."/>
            <person name="Matsuzawa A."/>
            <person name="Yoshikawa H."/>
            <person name="Tanaka T."/>
        </authorList>
    </citation>
    <scope>REGULATION BY SALA</scope>
</reference>
<reference key="8">
    <citation type="journal article" date="2005" name="J. Bacteriol.">
        <title>Inhibition of Bacillus subtilis scoC expression by multicopy senS.</title>
        <authorList>
            <person name="Kawachi E."/>
            <person name="Abe S."/>
            <person name="Tanaka T."/>
        </authorList>
    </citation>
    <scope>REGULATION BY SENS</scope>
    <source>
        <strain>168 / CU741</strain>
    </source>
</reference>
<reference key="9">
    <citation type="journal article" date="2006" name="J. Bacteriol.">
        <title>ScoC and SinR negatively regulate epr by corepression in Bacillus subtilis.</title>
        <authorList>
            <person name="Kodgire P."/>
            <person name="Dixit M."/>
            <person name="Rao K.K."/>
        </authorList>
    </citation>
    <scope>FUNCTION</scope>
    <scope>INTERACTION WITH SINR</scope>
    <source>
        <strain>168</strain>
    </source>
</reference>
<reference key="10">
    <citation type="journal article" date="2020" name="Nucleic Acids Res.">
        <title>Methyltransferase DnmA is responsible for genome-wide N6-methyladenosine modifications at non-palindromic recognition sites in Bacillus subtilis.</title>
        <authorList>
            <person name="Nye T.M."/>
            <person name="van Gijtenbeek L.A."/>
            <person name="Stevens A.G."/>
            <person name="Schroeder J.W."/>
            <person name="Randall J.R."/>
            <person name="Matthews L.A."/>
            <person name="Simmons L.A."/>
        </authorList>
    </citation>
    <scope>FUNCTION</scope>
    <scope>DNA-BINDING</scope>
    <source>
        <strain>168 / PY79</strain>
    </source>
</reference>
<reference key="11">
    <citation type="submission" date="2006-02" db="PDB data bank">
        <title>Structure of the protease production regulatory protein hpr from Bacillus subtilis.</title>
        <authorList>
            <person name="Cuff M.E."/>
            <person name="Skarina T."/>
            <person name="Edwards A."/>
            <person name="Savchenko A."/>
            <person name="Joachimiak A."/>
        </authorList>
    </citation>
    <scope>X-RAY CRYSTALLOGRAPHY (2.4 ANGSTROMS)</scope>
    <scope>SUBUNIT</scope>
</reference>
<evidence type="ECO:0000255" key="1">
    <source>
        <dbReference type="HAMAP-Rule" id="MF_01911"/>
    </source>
</evidence>
<evidence type="ECO:0000256" key="2">
    <source>
        <dbReference type="SAM" id="MobiDB-lite"/>
    </source>
</evidence>
<evidence type="ECO:0000269" key="3">
    <source>
    </source>
</evidence>
<evidence type="ECO:0000269" key="4">
    <source>
    </source>
</evidence>
<evidence type="ECO:0000269" key="5">
    <source>
    </source>
</evidence>
<evidence type="ECO:0000269" key="6">
    <source>
    </source>
</evidence>
<evidence type="ECO:0000269" key="7">
    <source>
    </source>
</evidence>
<evidence type="ECO:0000269" key="8">
    <source>
    </source>
</evidence>
<evidence type="ECO:0000269" key="9">
    <source>
    </source>
</evidence>
<evidence type="ECO:0000269" key="10">
    <source ref="11"/>
</evidence>
<evidence type="ECO:0000303" key="11">
    <source ref="11"/>
</evidence>
<evidence type="ECO:0007829" key="12">
    <source>
        <dbReference type="PDB" id="2FXA"/>
    </source>
</evidence>
<proteinExistence type="evidence at protein level"/>
<dbReference type="EMBL" id="M20237">
    <property type="protein sequence ID" value="AAA22525.1"/>
    <property type="molecule type" value="Genomic_DNA"/>
</dbReference>
<dbReference type="EMBL" id="Y14077">
    <property type="protein sequence ID" value="CAA74414.1"/>
    <property type="molecule type" value="Genomic_DNA"/>
</dbReference>
<dbReference type="EMBL" id="AL009126">
    <property type="protein sequence ID" value="CAB12839.1"/>
    <property type="molecule type" value="Genomic_DNA"/>
</dbReference>
<dbReference type="PIR" id="A32009">
    <property type="entry name" value="A32009"/>
</dbReference>
<dbReference type="RefSeq" id="NP_388880.1">
    <property type="nucleotide sequence ID" value="NC_000964.3"/>
</dbReference>
<dbReference type="RefSeq" id="WP_003239501.1">
    <property type="nucleotide sequence ID" value="NZ_OZ025638.1"/>
</dbReference>
<dbReference type="PDB" id="2FXA">
    <property type="method" value="X-ray"/>
    <property type="resolution" value="2.40 A"/>
    <property type="chains" value="A/B/C/D=1-203"/>
</dbReference>
<dbReference type="PDBsum" id="2FXA"/>
<dbReference type="SMR" id="P11065"/>
<dbReference type="FunCoup" id="P11065">
    <property type="interactions" value="20"/>
</dbReference>
<dbReference type="IntAct" id="P11065">
    <property type="interactions" value="3"/>
</dbReference>
<dbReference type="STRING" id="224308.BSU09990"/>
<dbReference type="jPOST" id="P11065"/>
<dbReference type="PaxDb" id="224308-BSU09990"/>
<dbReference type="EnsemblBacteria" id="CAB12839">
    <property type="protein sequence ID" value="CAB12839"/>
    <property type="gene ID" value="BSU_09990"/>
</dbReference>
<dbReference type="GeneID" id="939765"/>
<dbReference type="KEGG" id="bsu:BSU09990"/>
<dbReference type="PATRIC" id="fig|224308.179.peg.1074"/>
<dbReference type="eggNOG" id="COG1846">
    <property type="taxonomic scope" value="Bacteria"/>
</dbReference>
<dbReference type="InParanoid" id="P11065"/>
<dbReference type="OrthoDB" id="2393954at2"/>
<dbReference type="BioCyc" id="BSUB:BSU09990-MONOMER"/>
<dbReference type="EvolutionaryTrace" id="P11065"/>
<dbReference type="Proteomes" id="UP000001570">
    <property type="component" value="Chromosome"/>
</dbReference>
<dbReference type="GO" id="GO:0003677">
    <property type="term" value="F:DNA binding"/>
    <property type="evidence" value="ECO:0007669"/>
    <property type="project" value="UniProtKB-UniRule"/>
</dbReference>
<dbReference type="GO" id="GO:0003700">
    <property type="term" value="F:DNA-binding transcription factor activity"/>
    <property type="evidence" value="ECO:0007669"/>
    <property type="project" value="UniProtKB-UniRule"/>
</dbReference>
<dbReference type="GO" id="GO:0045892">
    <property type="term" value="P:negative regulation of DNA-templated transcription"/>
    <property type="evidence" value="ECO:0007669"/>
    <property type="project" value="UniProtKB-UniRule"/>
</dbReference>
<dbReference type="GO" id="GO:0006355">
    <property type="term" value="P:regulation of DNA-templated transcription"/>
    <property type="evidence" value="ECO:0000315"/>
    <property type="project" value="CACAO"/>
</dbReference>
<dbReference type="GO" id="GO:0006950">
    <property type="term" value="P:response to stress"/>
    <property type="evidence" value="ECO:0000318"/>
    <property type="project" value="GO_Central"/>
</dbReference>
<dbReference type="GO" id="GO:0030435">
    <property type="term" value="P:sporulation resulting in formation of a cellular spore"/>
    <property type="evidence" value="ECO:0007669"/>
    <property type="project" value="UniProtKB-UniRule"/>
</dbReference>
<dbReference type="FunFam" id="1.10.10.10:FF:000194">
    <property type="entry name" value="HTH-type transcriptional regulator Hpr"/>
    <property type="match status" value="1"/>
</dbReference>
<dbReference type="Gene3D" id="1.10.10.10">
    <property type="entry name" value="Winged helix-like DNA-binding domain superfamily/Winged helix DNA-binding domain"/>
    <property type="match status" value="1"/>
</dbReference>
<dbReference type="HAMAP" id="MF_01911">
    <property type="entry name" value="HTH_type_Hpr"/>
    <property type="match status" value="1"/>
</dbReference>
<dbReference type="InterPro" id="IPR000835">
    <property type="entry name" value="HTH_MarR-typ"/>
</dbReference>
<dbReference type="InterPro" id="IPR023488">
    <property type="entry name" value="HTH_tscrpt_reg_Hpr"/>
</dbReference>
<dbReference type="InterPro" id="IPR039422">
    <property type="entry name" value="MarR/SlyA-like"/>
</dbReference>
<dbReference type="InterPro" id="IPR023187">
    <property type="entry name" value="Tscrpt_reg_MarR-type_CS"/>
</dbReference>
<dbReference type="InterPro" id="IPR036388">
    <property type="entry name" value="WH-like_DNA-bd_sf"/>
</dbReference>
<dbReference type="InterPro" id="IPR036390">
    <property type="entry name" value="WH_DNA-bd_sf"/>
</dbReference>
<dbReference type="NCBIfam" id="NF010349">
    <property type="entry name" value="PRK13777.1"/>
    <property type="match status" value="1"/>
</dbReference>
<dbReference type="PANTHER" id="PTHR33164:SF58">
    <property type="entry name" value="DNA-BINDING TRANSCRIPTIONAL REPRESSOR SCOC"/>
    <property type="match status" value="1"/>
</dbReference>
<dbReference type="PANTHER" id="PTHR33164">
    <property type="entry name" value="TRANSCRIPTIONAL REGULATOR, MARR FAMILY"/>
    <property type="match status" value="1"/>
</dbReference>
<dbReference type="Pfam" id="PF01047">
    <property type="entry name" value="MarR"/>
    <property type="match status" value="1"/>
</dbReference>
<dbReference type="SMART" id="SM00347">
    <property type="entry name" value="HTH_MARR"/>
    <property type="match status" value="1"/>
</dbReference>
<dbReference type="SUPFAM" id="SSF46785">
    <property type="entry name" value="Winged helix' DNA-binding domain"/>
    <property type="match status" value="1"/>
</dbReference>
<dbReference type="PROSITE" id="PS01117">
    <property type="entry name" value="HTH_MARR_1"/>
    <property type="match status" value="1"/>
</dbReference>
<dbReference type="PROSITE" id="PS50995">
    <property type="entry name" value="HTH_MARR_2"/>
    <property type="match status" value="1"/>
</dbReference>
<accession>P11065</accession>
<sequence>MNRVEPPYDVKEALVFTQKMAQLSKALWKSIEKDWQQWLKPYDLNINEHHILWIAYQLNGASISEIAKFGVMHVSTAFNFSKKLEERGYLRFSKRLNDKRNTYVQLTEEGTEVFWSLLEEFDPTRNAVFKGSQPLYHLFGKFPEVAEMMCMIRHIYGDDFMEIFETSLTNIDNDFESVNGKLKKKAKDSAADEPAEELEPVNS</sequence>
<organism>
    <name type="scientific">Bacillus subtilis (strain 168)</name>
    <dbReference type="NCBI Taxonomy" id="224308"/>
    <lineage>
        <taxon>Bacteria</taxon>
        <taxon>Bacillati</taxon>
        <taxon>Bacillota</taxon>
        <taxon>Bacilli</taxon>
        <taxon>Bacillales</taxon>
        <taxon>Bacillaceae</taxon>
        <taxon>Bacillus</taxon>
    </lineage>
</organism>